<feature type="chain" id="PRO_1000092343" description="Hydroxylamine reductase">
    <location>
        <begin position="1"/>
        <end position="550"/>
    </location>
</feature>
<feature type="binding site" evidence="1">
    <location>
        <position position="3"/>
    </location>
    <ligand>
        <name>[2Fe-2S] cluster</name>
        <dbReference type="ChEBI" id="CHEBI:190135"/>
    </ligand>
</feature>
<feature type="binding site" evidence="1">
    <location>
        <position position="6"/>
    </location>
    <ligand>
        <name>[2Fe-2S] cluster</name>
        <dbReference type="ChEBI" id="CHEBI:190135"/>
    </ligand>
</feature>
<feature type="binding site" evidence="1">
    <location>
        <position position="18"/>
    </location>
    <ligand>
        <name>[2Fe-2S] cluster</name>
        <dbReference type="ChEBI" id="CHEBI:190135"/>
    </ligand>
</feature>
<feature type="binding site" evidence="1">
    <location>
        <position position="25"/>
    </location>
    <ligand>
        <name>[2Fe-2S] cluster</name>
        <dbReference type="ChEBI" id="CHEBI:190135"/>
    </ligand>
</feature>
<feature type="binding site" evidence="1">
    <location>
        <position position="249"/>
    </location>
    <ligand>
        <name>hybrid [4Fe-2O-2S] cluster</name>
        <dbReference type="ChEBI" id="CHEBI:60519"/>
    </ligand>
</feature>
<feature type="binding site" evidence="1">
    <location>
        <position position="273"/>
    </location>
    <ligand>
        <name>hybrid [4Fe-2O-2S] cluster</name>
        <dbReference type="ChEBI" id="CHEBI:60519"/>
    </ligand>
</feature>
<feature type="binding site" evidence="1">
    <location>
        <position position="317"/>
    </location>
    <ligand>
        <name>hybrid [4Fe-2O-2S] cluster</name>
        <dbReference type="ChEBI" id="CHEBI:60519"/>
    </ligand>
</feature>
<feature type="binding site" description="via persulfide group" evidence="1">
    <location>
        <position position="405"/>
    </location>
    <ligand>
        <name>hybrid [4Fe-2O-2S] cluster</name>
        <dbReference type="ChEBI" id="CHEBI:60519"/>
    </ligand>
</feature>
<feature type="binding site" evidence="1">
    <location>
        <position position="433"/>
    </location>
    <ligand>
        <name>hybrid [4Fe-2O-2S] cluster</name>
        <dbReference type="ChEBI" id="CHEBI:60519"/>
    </ligand>
</feature>
<feature type="binding site" evidence="1">
    <location>
        <position position="458"/>
    </location>
    <ligand>
        <name>hybrid [4Fe-2O-2S] cluster</name>
        <dbReference type="ChEBI" id="CHEBI:60519"/>
    </ligand>
</feature>
<feature type="binding site" evidence="1">
    <location>
        <position position="492"/>
    </location>
    <ligand>
        <name>hybrid [4Fe-2O-2S] cluster</name>
        <dbReference type="ChEBI" id="CHEBI:60519"/>
    </ligand>
</feature>
<feature type="binding site" evidence="1">
    <location>
        <position position="494"/>
    </location>
    <ligand>
        <name>hybrid [4Fe-2O-2S] cluster</name>
        <dbReference type="ChEBI" id="CHEBI:60519"/>
    </ligand>
</feature>
<feature type="modified residue" description="Cysteine persulfide" evidence="1">
    <location>
        <position position="405"/>
    </location>
</feature>
<organism>
    <name type="scientific">Proteus mirabilis (strain HI4320)</name>
    <dbReference type="NCBI Taxonomy" id="529507"/>
    <lineage>
        <taxon>Bacteria</taxon>
        <taxon>Pseudomonadati</taxon>
        <taxon>Pseudomonadota</taxon>
        <taxon>Gammaproteobacteria</taxon>
        <taxon>Enterobacterales</taxon>
        <taxon>Morganellaceae</taxon>
        <taxon>Proteus</taxon>
    </lineage>
</organism>
<sequence length="550" mass="60561">MYCVQCEQTMRTPVGNGCAYAQGMCGKTAETSDLQDLLVAVLEGLSAWALAARSVDIIDHDIDSFAPRAFFSTLTNVNFDSERIVGYAKEAIYLRESLKSRTLAKNAAIQVAHPKAEIQLEGNDLASLQKQAQRFALNNDKAQVGDDLHGLRMLCLYGLKGAAAYMEHAHVLGQYDDEIYAEYHRYMAWLGTDPADMNELLDNAMGIGQMNFRIMALLDKGETQAYGDPTPVSVNVRPVAGKAILISGHDLKDLQMLLEQTEGKGINVYTHGEMLPAHGYPELKKYKHLVGNYGSGWQNQQSEFAKFPGPVLMTSNCIIDPNVGNYGDRIWTRSIVGWPGVKHIKGDDFSEMIEQALSLEGFPYSEIEHLITVGFGRQTLLNAADTVIDLVSQKKLRHVFLVGGCDGSRGERSYYTDLARAIPQDCLIMTLACGKYRFNKLDFGTLEGLPRLLDVGQCNDAYSAIMLAVNLAEKLGCGVNDLPLSLILSWFEQKAIVILLTLLSLGVKNIYTGPTAPAFLTDNLLAILNEKFGMRAITTPEQDLQEILSA</sequence>
<protein>
    <recommendedName>
        <fullName evidence="1">Hydroxylamine reductase</fullName>
        <ecNumber evidence="1">1.7.99.1</ecNumber>
    </recommendedName>
    <alternativeName>
        <fullName evidence="1">Hybrid-cluster protein</fullName>
        <shortName evidence="1">HCP</shortName>
    </alternativeName>
    <alternativeName>
        <fullName evidence="1">Prismane protein</fullName>
    </alternativeName>
</protein>
<name>HCP_PROMH</name>
<comment type="function">
    <text evidence="1">Catalyzes the reduction of hydroxylamine to form NH(3) and H(2)O.</text>
</comment>
<comment type="catalytic activity">
    <reaction evidence="1">
        <text>A + NH4(+) + H2O = hydroxylamine + AH2 + H(+)</text>
        <dbReference type="Rhea" id="RHEA:22052"/>
        <dbReference type="ChEBI" id="CHEBI:13193"/>
        <dbReference type="ChEBI" id="CHEBI:15377"/>
        <dbReference type="ChEBI" id="CHEBI:15378"/>
        <dbReference type="ChEBI" id="CHEBI:15429"/>
        <dbReference type="ChEBI" id="CHEBI:17499"/>
        <dbReference type="ChEBI" id="CHEBI:28938"/>
        <dbReference type="EC" id="1.7.99.1"/>
    </reaction>
</comment>
<comment type="cofactor">
    <cofactor evidence="1">
        <name>[2Fe-2S] cluster</name>
        <dbReference type="ChEBI" id="CHEBI:190135"/>
    </cofactor>
    <text evidence="1">Binds 1 [2Fe-2S] cluster.</text>
</comment>
<comment type="cofactor">
    <cofactor evidence="1">
        <name>hybrid [4Fe-2O-2S] cluster</name>
        <dbReference type="ChEBI" id="CHEBI:60519"/>
    </cofactor>
    <text evidence="1">Binds 1 hybrid [4Fe-2O-2S] cluster.</text>
</comment>
<comment type="subcellular location">
    <subcellularLocation>
        <location evidence="1">Cytoplasm</location>
    </subcellularLocation>
</comment>
<comment type="similarity">
    <text evidence="1">Belongs to the HCP family.</text>
</comment>
<keyword id="KW-0001">2Fe-2S</keyword>
<keyword id="KW-0963">Cytoplasm</keyword>
<keyword id="KW-0408">Iron</keyword>
<keyword id="KW-0411">Iron-sulfur</keyword>
<keyword id="KW-0479">Metal-binding</keyword>
<keyword id="KW-0560">Oxidoreductase</keyword>
<keyword id="KW-1185">Reference proteome</keyword>
<proteinExistence type="inferred from homology"/>
<gene>
    <name evidence="1" type="primary">hcp</name>
    <name type="ordered locus">PMI2112</name>
</gene>
<evidence type="ECO:0000255" key="1">
    <source>
        <dbReference type="HAMAP-Rule" id="MF_00069"/>
    </source>
</evidence>
<accession>B4F1C2</accession>
<reference key="1">
    <citation type="journal article" date="2008" name="J. Bacteriol.">
        <title>Complete genome sequence of uropathogenic Proteus mirabilis, a master of both adherence and motility.</title>
        <authorList>
            <person name="Pearson M.M."/>
            <person name="Sebaihia M."/>
            <person name="Churcher C."/>
            <person name="Quail M.A."/>
            <person name="Seshasayee A.S."/>
            <person name="Luscombe N.M."/>
            <person name="Abdellah Z."/>
            <person name="Arrosmith C."/>
            <person name="Atkin B."/>
            <person name="Chillingworth T."/>
            <person name="Hauser H."/>
            <person name="Jagels K."/>
            <person name="Moule S."/>
            <person name="Mungall K."/>
            <person name="Norbertczak H."/>
            <person name="Rabbinowitsch E."/>
            <person name="Walker D."/>
            <person name="Whithead S."/>
            <person name="Thomson N.R."/>
            <person name="Rather P.N."/>
            <person name="Parkhill J."/>
            <person name="Mobley H.L.T."/>
        </authorList>
    </citation>
    <scope>NUCLEOTIDE SEQUENCE [LARGE SCALE GENOMIC DNA]</scope>
    <source>
        <strain>HI4320</strain>
    </source>
</reference>
<dbReference type="EC" id="1.7.99.1" evidence="1"/>
<dbReference type="EMBL" id="AM942759">
    <property type="protein sequence ID" value="CAR44218.1"/>
    <property type="molecule type" value="Genomic_DNA"/>
</dbReference>
<dbReference type="RefSeq" id="WP_004244173.1">
    <property type="nucleotide sequence ID" value="NC_010554.1"/>
</dbReference>
<dbReference type="SMR" id="B4F1C2"/>
<dbReference type="EnsemblBacteria" id="CAR44218">
    <property type="protein sequence ID" value="CAR44218"/>
    <property type="gene ID" value="PMI2112"/>
</dbReference>
<dbReference type="GeneID" id="6802056"/>
<dbReference type="KEGG" id="pmr:PMI2112"/>
<dbReference type="eggNOG" id="COG1151">
    <property type="taxonomic scope" value="Bacteria"/>
</dbReference>
<dbReference type="HOGENOM" id="CLU_038344_2_0_6"/>
<dbReference type="Proteomes" id="UP000008319">
    <property type="component" value="Chromosome"/>
</dbReference>
<dbReference type="GO" id="GO:0005737">
    <property type="term" value="C:cytoplasm"/>
    <property type="evidence" value="ECO:0007669"/>
    <property type="project" value="UniProtKB-SubCell"/>
</dbReference>
<dbReference type="GO" id="GO:0051537">
    <property type="term" value="F:2 iron, 2 sulfur cluster binding"/>
    <property type="evidence" value="ECO:0007669"/>
    <property type="project" value="UniProtKB-KW"/>
</dbReference>
<dbReference type="GO" id="GO:0050418">
    <property type="term" value="F:hydroxylamine reductase activity"/>
    <property type="evidence" value="ECO:0007669"/>
    <property type="project" value="UniProtKB-UniRule"/>
</dbReference>
<dbReference type="GO" id="GO:0046872">
    <property type="term" value="F:metal ion binding"/>
    <property type="evidence" value="ECO:0007669"/>
    <property type="project" value="UniProtKB-KW"/>
</dbReference>
<dbReference type="GO" id="GO:0004601">
    <property type="term" value="F:peroxidase activity"/>
    <property type="evidence" value="ECO:0007669"/>
    <property type="project" value="TreeGrafter"/>
</dbReference>
<dbReference type="GO" id="GO:0042542">
    <property type="term" value="P:response to hydrogen peroxide"/>
    <property type="evidence" value="ECO:0007669"/>
    <property type="project" value="TreeGrafter"/>
</dbReference>
<dbReference type="CDD" id="cd01914">
    <property type="entry name" value="HCP"/>
    <property type="match status" value="1"/>
</dbReference>
<dbReference type="FunFam" id="1.20.1270.20:FF:000001">
    <property type="entry name" value="Hydroxylamine reductase"/>
    <property type="match status" value="1"/>
</dbReference>
<dbReference type="FunFam" id="1.20.1270.20:FF:000002">
    <property type="entry name" value="Hydroxylamine reductase"/>
    <property type="match status" value="1"/>
</dbReference>
<dbReference type="FunFam" id="3.40.50.2030:FF:000001">
    <property type="entry name" value="Hydroxylamine reductase"/>
    <property type="match status" value="1"/>
</dbReference>
<dbReference type="FunFam" id="3.40.50.2030:FF:000002">
    <property type="entry name" value="Hydroxylamine reductase"/>
    <property type="match status" value="1"/>
</dbReference>
<dbReference type="Gene3D" id="1.20.1270.20">
    <property type="match status" value="2"/>
</dbReference>
<dbReference type="Gene3D" id="3.40.50.2030">
    <property type="match status" value="2"/>
</dbReference>
<dbReference type="HAMAP" id="MF_00069">
    <property type="entry name" value="Hydroxylam_reduct"/>
    <property type="match status" value="1"/>
</dbReference>
<dbReference type="InterPro" id="IPR004137">
    <property type="entry name" value="HCP/CODH"/>
</dbReference>
<dbReference type="InterPro" id="IPR010048">
    <property type="entry name" value="Hydroxylam_reduct"/>
</dbReference>
<dbReference type="InterPro" id="IPR016099">
    <property type="entry name" value="Prismane-like_a/b-sand"/>
</dbReference>
<dbReference type="InterPro" id="IPR011254">
    <property type="entry name" value="Prismane-like_sf"/>
</dbReference>
<dbReference type="InterPro" id="IPR016100">
    <property type="entry name" value="Prismane_a-bundle"/>
</dbReference>
<dbReference type="NCBIfam" id="TIGR01703">
    <property type="entry name" value="hybrid_clust"/>
    <property type="match status" value="1"/>
</dbReference>
<dbReference type="NCBIfam" id="NF003658">
    <property type="entry name" value="PRK05290.1"/>
    <property type="match status" value="1"/>
</dbReference>
<dbReference type="PANTHER" id="PTHR30109">
    <property type="entry name" value="HYDROXYLAMINE REDUCTASE"/>
    <property type="match status" value="1"/>
</dbReference>
<dbReference type="PANTHER" id="PTHR30109:SF0">
    <property type="entry name" value="HYDROXYLAMINE REDUCTASE"/>
    <property type="match status" value="1"/>
</dbReference>
<dbReference type="Pfam" id="PF03063">
    <property type="entry name" value="Prismane"/>
    <property type="match status" value="1"/>
</dbReference>
<dbReference type="PIRSF" id="PIRSF000076">
    <property type="entry name" value="HCP"/>
    <property type="match status" value="1"/>
</dbReference>
<dbReference type="SUPFAM" id="SSF56821">
    <property type="entry name" value="Prismane protein-like"/>
    <property type="match status" value="1"/>
</dbReference>